<reference key="1">
    <citation type="journal article" date="2009" name="Infect. Immun.">
        <title>Comparative genomics reveal extensive transposon-mediated genomic plasticity and diversity among potential effector proteins within the genus Coxiella.</title>
        <authorList>
            <person name="Beare P.A."/>
            <person name="Unsworth N."/>
            <person name="Andoh M."/>
            <person name="Voth D.E."/>
            <person name="Omsland A."/>
            <person name="Gilk S.D."/>
            <person name="Williams K.P."/>
            <person name="Sobral B.W."/>
            <person name="Kupko J.J. III"/>
            <person name="Porcella S.F."/>
            <person name="Samuel J.E."/>
            <person name="Heinzen R.A."/>
        </authorList>
    </citation>
    <scope>NUCLEOTIDE SEQUENCE [LARGE SCALE GENOMIC DNA]</scope>
    <source>
        <strain>CbuK_Q154</strain>
    </source>
</reference>
<feature type="chain" id="PRO_1000097944" description="ATP-dependent Clp protease ATP-binding subunit ClpX">
    <location>
        <begin position="1"/>
        <end position="422"/>
    </location>
</feature>
<feature type="domain" description="ClpX-type ZB" evidence="2">
    <location>
        <begin position="1"/>
        <end position="53"/>
    </location>
</feature>
<feature type="binding site" evidence="2">
    <location>
        <position position="12"/>
    </location>
    <ligand>
        <name>Zn(2+)</name>
        <dbReference type="ChEBI" id="CHEBI:29105"/>
    </ligand>
</feature>
<feature type="binding site" evidence="2">
    <location>
        <position position="15"/>
    </location>
    <ligand>
        <name>Zn(2+)</name>
        <dbReference type="ChEBI" id="CHEBI:29105"/>
    </ligand>
</feature>
<feature type="binding site" evidence="2">
    <location>
        <position position="34"/>
    </location>
    <ligand>
        <name>Zn(2+)</name>
        <dbReference type="ChEBI" id="CHEBI:29105"/>
    </ligand>
</feature>
<feature type="binding site" evidence="2">
    <location>
        <position position="37"/>
    </location>
    <ligand>
        <name>Zn(2+)</name>
        <dbReference type="ChEBI" id="CHEBI:29105"/>
    </ligand>
</feature>
<feature type="binding site" evidence="1">
    <location>
        <begin position="116"/>
        <end position="123"/>
    </location>
    <ligand>
        <name>ATP</name>
        <dbReference type="ChEBI" id="CHEBI:30616"/>
    </ligand>
</feature>
<name>CLPX_COXB1</name>
<comment type="function">
    <text evidence="1">ATP-dependent specificity component of the Clp protease. It directs the protease to specific substrates. Can perform chaperone functions in the absence of ClpP.</text>
</comment>
<comment type="subunit">
    <text evidence="1">Component of the ClpX-ClpP complex. Forms a hexameric ring that, in the presence of ATP, binds to fourteen ClpP subunits assembled into a disk-like structure with a central cavity, resembling the structure of eukaryotic proteasomes.</text>
</comment>
<comment type="similarity">
    <text evidence="1">Belongs to the ClpX chaperone family.</text>
</comment>
<gene>
    <name evidence="1" type="primary">clpX</name>
    <name type="ordered locus">CbuK_1516</name>
</gene>
<keyword id="KW-0067">ATP-binding</keyword>
<keyword id="KW-0143">Chaperone</keyword>
<keyword id="KW-0479">Metal-binding</keyword>
<keyword id="KW-0547">Nucleotide-binding</keyword>
<keyword id="KW-0862">Zinc</keyword>
<organism>
    <name type="scientific">Coxiella burnetii (strain CbuK_Q154)</name>
    <name type="common">Coxiella burnetii (strain Q154)</name>
    <dbReference type="NCBI Taxonomy" id="434924"/>
    <lineage>
        <taxon>Bacteria</taxon>
        <taxon>Pseudomonadati</taxon>
        <taxon>Pseudomonadota</taxon>
        <taxon>Gammaproteobacteria</taxon>
        <taxon>Legionellales</taxon>
        <taxon>Coxiellaceae</taxon>
        <taxon>Coxiella</taxon>
    </lineage>
</organism>
<evidence type="ECO:0000255" key="1">
    <source>
        <dbReference type="HAMAP-Rule" id="MF_00175"/>
    </source>
</evidence>
<evidence type="ECO:0000255" key="2">
    <source>
        <dbReference type="PROSITE-ProRule" id="PRU01250"/>
    </source>
</evidence>
<protein>
    <recommendedName>
        <fullName evidence="1">ATP-dependent Clp protease ATP-binding subunit ClpX</fullName>
    </recommendedName>
</protein>
<accession>B6J8W3</accession>
<proteinExistence type="inferred from homology"/>
<sequence length="422" mass="46768">MSSDEKLQILYCSFCGKSQHQVRKLIAGPAVFVCNECVDLCNDIIREEEIAQAGGAQKKLPTPPEIHRMLDEYVIGQEFAKKVLSVAVYNHYKRLGNQTKKDSVEISKSNILLIGPTGSGKTLLAQTLAKILDVPFAIADATTLTEAGYVGEDVENIIQKLLQKCNYDVEKAKTGIIYIDEIDKIARKTDSPSLTRDVSGEGVQQALLKLIEGTVASIPPQGGRKHPQQEYLQVDTSNILFICGGAFADLHKIIQRRTDKSGIGFAAEVRPKEDFSREASKLIKQTEPGDLIKYGLIPEFVGRLPIITTLEELDEDALMRILTEPKNALVKQYRKLFEFEGVEIDFREDALKAIAKRAIQQKTGARGLRSIVEHTLLDLMYDLPGVAAGLRKVVIDSGVIDQASPPIFIYHHEKASRKVAQE</sequence>
<dbReference type="EMBL" id="CP001020">
    <property type="protein sequence ID" value="ACJ20679.1"/>
    <property type="molecule type" value="Genomic_DNA"/>
</dbReference>
<dbReference type="RefSeq" id="WP_005771771.1">
    <property type="nucleotide sequence ID" value="NC_011528.1"/>
</dbReference>
<dbReference type="SMR" id="B6J8W3"/>
<dbReference type="KEGG" id="cbc:CbuK_1516"/>
<dbReference type="HOGENOM" id="CLU_014218_8_2_6"/>
<dbReference type="GO" id="GO:0009376">
    <property type="term" value="C:HslUV protease complex"/>
    <property type="evidence" value="ECO:0007669"/>
    <property type="project" value="TreeGrafter"/>
</dbReference>
<dbReference type="GO" id="GO:0005524">
    <property type="term" value="F:ATP binding"/>
    <property type="evidence" value="ECO:0007669"/>
    <property type="project" value="UniProtKB-UniRule"/>
</dbReference>
<dbReference type="GO" id="GO:0016887">
    <property type="term" value="F:ATP hydrolysis activity"/>
    <property type="evidence" value="ECO:0007669"/>
    <property type="project" value="InterPro"/>
</dbReference>
<dbReference type="GO" id="GO:0140662">
    <property type="term" value="F:ATP-dependent protein folding chaperone"/>
    <property type="evidence" value="ECO:0007669"/>
    <property type="project" value="InterPro"/>
</dbReference>
<dbReference type="GO" id="GO:0046983">
    <property type="term" value="F:protein dimerization activity"/>
    <property type="evidence" value="ECO:0007669"/>
    <property type="project" value="InterPro"/>
</dbReference>
<dbReference type="GO" id="GO:0051082">
    <property type="term" value="F:unfolded protein binding"/>
    <property type="evidence" value="ECO:0007669"/>
    <property type="project" value="UniProtKB-UniRule"/>
</dbReference>
<dbReference type="GO" id="GO:0008270">
    <property type="term" value="F:zinc ion binding"/>
    <property type="evidence" value="ECO:0007669"/>
    <property type="project" value="InterPro"/>
</dbReference>
<dbReference type="GO" id="GO:0051301">
    <property type="term" value="P:cell division"/>
    <property type="evidence" value="ECO:0007669"/>
    <property type="project" value="TreeGrafter"/>
</dbReference>
<dbReference type="GO" id="GO:0051603">
    <property type="term" value="P:proteolysis involved in protein catabolic process"/>
    <property type="evidence" value="ECO:0007669"/>
    <property type="project" value="TreeGrafter"/>
</dbReference>
<dbReference type="CDD" id="cd19497">
    <property type="entry name" value="RecA-like_ClpX"/>
    <property type="match status" value="1"/>
</dbReference>
<dbReference type="FunFam" id="1.10.8.60:FF:000002">
    <property type="entry name" value="ATP-dependent Clp protease ATP-binding subunit ClpX"/>
    <property type="match status" value="1"/>
</dbReference>
<dbReference type="FunFam" id="3.40.50.300:FF:000005">
    <property type="entry name" value="ATP-dependent Clp protease ATP-binding subunit ClpX"/>
    <property type="match status" value="1"/>
</dbReference>
<dbReference type="Gene3D" id="1.10.8.60">
    <property type="match status" value="1"/>
</dbReference>
<dbReference type="Gene3D" id="6.20.220.10">
    <property type="entry name" value="ClpX chaperone, C4-type zinc finger domain"/>
    <property type="match status" value="1"/>
</dbReference>
<dbReference type="Gene3D" id="3.40.50.300">
    <property type="entry name" value="P-loop containing nucleotide triphosphate hydrolases"/>
    <property type="match status" value="1"/>
</dbReference>
<dbReference type="HAMAP" id="MF_00175">
    <property type="entry name" value="ClpX"/>
    <property type="match status" value="1"/>
</dbReference>
<dbReference type="InterPro" id="IPR003593">
    <property type="entry name" value="AAA+_ATPase"/>
</dbReference>
<dbReference type="InterPro" id="IPR050052">
    <property type="entry name" value="ATP-dep_Clp_protease_ClpX"/>
</dbReference>
<dbReference type="InterPro" id="IPR003959">
    <property type="entry name" value="ATPase_AAA_core"/>
</dbReference>
<dbReference type="InterPro" id="IPR019489">
    <property type="entry name" value="Clp_ATPase_C"/>
</dbReference>
<dbReference type="InterPro" id="IPR004487">
    <property type="entry name" value="Clp_protease_ATP-bd_su_ClpX"/>
</dbReference>
<dbReference type="InterPro" id="IPR046425">
    <property type="entry name" value="ClpX_bact"/>
</dbReference>
<dbReference type="InterPro" id="IPR027417">
    <property type="entry name" value="P-loop_NTPase"/>
</dbReference>
<dbReference type="InterPro" id="IPR010603">
    <property type="entry name" value="Znf_CppX_C4"/>
</dbReference>
<dbReference type="InterPro" id="IPR038366">
    <property type="entry name" value="Znf_CppX_C4_sf"/>
</dbReference>
<dbReference type="NCBIfam" id="TIGR00382">
    <property type="entry name" value="clpX"/>
    <property type="match status" value="1"/>
</dbReference>
<dbReference type="NCBIfam" id="NF003745">
    <property type="entry name" value="PRK05342.1"/>
    <property type="match status" value="1"/>
</dbReference>
<dbReference type="PANTHER" id="PTHR48102:SF7">
    <property type="entry name" value="ATP-DEPENDENT CLP PROTEASE ATP-BINDING SUBUNIT CLPX-LIKE, MITOCHONDRIAL"/>
    <property type="match status" value="1"/>
</dbReference>
<dbReference type="PANTHER" id="PTHR48102">
    <property type="entry name" value="ATP-DEPENDENT CLP PROTEASE ATP-BINDING SUBUNIT CLPX-LIKE, MITOCHONDRIAL-RELATED"/>
    <property type="match status" value="1"/>
</dbReference>
<dbReference type="Pfam" id="PF07724">
    <property type="entry name" value="AAA_2"/>
    <property type="match status" value="1"/>
</dbReference>
<dbReference type="Pfam" id="PF10431">
    <property type="entry name" value="ClpB_D2-small"/>
    <property type="match status" value="1"/>
</dbReference>
<dbReference type="Pfam" id="PF06689">
    <property type="entry name" value="zf-C4_ClpX"/>
    <property type="match status" value="1"/>
</dbReference>
<dbReference type="SMART" id="SM00382">
    <property type="entry name" value="AAA"/>
    <property type="match status" value="1"/>
</dbReference>
<dbReference type="SMART" id="SM01086">
    <property type="entry name" value="ClpB_D2-small"/>
    <property type="match status" value="1"/>
</dbReference>
<dbReference type="SMART" id="SM00994">
    <property type="entry name" value="zf-C4_ClpX"/>
    <property type="match status" value="1"/>
</dbReference>
<dbReference type="SUPFAM" id="SSF57716">
    <property type="entry name" value="Glucocorticoid receptor-like (DNA-binding domain)"/>
    <property type="match status" value="1"/>
</dbReference>
<dbReference type="SUPFAM" id="SSF52540">
    <property type="entry name" value="P-loop containing nucleoside triphosphate hydrolases"/>
    <property type="match status" value="1"/>
</dbReference>
<dbReference type="PROSITE" id="PS51902">
    <property type="entry name" value="CLPX_ZB"/>
    <property type="match status" value="1"/>
</dbReference>